<reference key="1">
    <citation type="submission" date="2007-03" db="EMBL/GenBank/DDBJ databases">
        <authorList>
            <person name="Heidelberg J."/>
        </authorList>
    </citation>
    <scope>NUCLEOTIDE SEQUENCE [LARGE SCALE GENOMIC DNA]</scope>
    <source>
        <strain>ATCC 39541 / Classical Ogawa 395 / O395</strain>
    </source>
</reference>
<reference key="2">
    <citation type="journal article" date="2008" name="PLoS ONE">
        <title>A recalibrated molecular clock and independent origins for the cholera pandemic clones.</title>
        <authorList>
            <person name="Feng L."/>
            <person name="Reeves P.R."/>
            <person name="Lan R."/>
            <person name="Ren Y."/>
            <person name="Gao C."/>
            <person name="Zhou Z."/>
            <person name="Ren Y."/>
            <person name="Cheng J."/>
            <person name="Wang W."/>
            <person name="Wang J."/>
            <person name="Qian W."/>
            <person name="Li D."/>
            <person name="Wang L."/>
        </authorList>
    </citation>
    <scope>NUCLEOTIDE SEQUENCE [LARGE SCALE GENOMIC DNA]</scope>
    <source>
        <strain>ATCC 39541 / Classical Ogawa 395 / O395</strain>
    </source>
</reference>
<sequence length="149" mass="15611">MQVILLDKIGNLGSLGDTVNVKSGYARNFLIPQGKAVMATKANVAMFESRRAELEAKVAEQLAAAQTRADQVNALEAVVIASKAGDEGKLFGSIGTRDIADAITAAGVKVSKSEVRLPEGALRNVGAYEVSVQLHSEVFATAKVQVVAE</sequence>
<gene>
    <name evidence="1" type="primary">rplI</name>
    <name type="ordered locus">VC0395_A2780</name>
    <name type="ordered locus">VC395_0412</name>
</gene>
<proteinExistence type="inferred from homology"/>
<dbReference type="EMBL" id="CP000627">
    <property type="protein sequence ID" value="ABQ19913.1"/>
    <property type="molecule type" value="Genomic_DNA"/>
</dbReference>
<dbReference type="EMBL" id="CP001235">
    <property type="protein sequence ID" value="ACP08435.1"/>
    <property type="molecule type" value="Genomic_DNA"/>
</dbReference>
<dbReference type="RefSeq" id="WP_001196054.1">
    <property type="nucleotide sequence ID" value="NZ_JAACZH010000040.1"/>
</dbReference>
<dbReference type="SMR" id="A5F3I8"/>
<dbReference type="GeneID" id="88783676"/>
<dbReference type="KEGG" id="vco:VC0395_A2780"/>
<dbReference type="KEGG" id="vcr:VC395_0412"/>
<dbReference type="PATRIC" id="fig|345073.21.peg.400"/>
<dbReference type="eggNOG" id="COG0359">
    <property type="taxonomic scope" value="Bacteria"/>
</dbReference>
<dbReference type="HOGENOM" id="CLU_078938_4_1_6"/>
<dbReference type="OrthoDB" id="9788336at2"/>
<dbReference type="Proteomes" id="UP000000249">
    <property type="component" value="Chromosome 2"/>
</dbReference>
<dbReference type="GO" id="GO:1990904">
    <property type="term" value="C:ribonucleoprotein complex"/>
    <property type="evidence" value="ECO:0007669"/>
    <property type="project" value="UniProtKB-KW"/>
</dbReference>
<dbReference type="GO" id="GO:0005840">
    <property type="term" value="C:ribosome"/>
    <property type="evidence" value="ECO:0007669"/>
    <property type="project" value="UniProtKB-KW"/>
</dbReference>
<dbReference type="GO" id="GO:0019843">
    <property type="term" value="F:rRNA binding"/>
    <property type="evidence" value="ECO:0007669"/>
    <property type="project" value="UniProtKB-UniRule"/>
</dbReference>
<dbReference type="GO" id="GO:0003735">
    <property type="term" value="F:structural constituent of ribosome"/>
    <property type="evidence" value="ECO:0007669"/>
    <property type="project" value="InterPro"/>
</dbReference>
<dbReference type="GO" id="GO:0006412">
    <property type="term" value="P:translation"/>
    <property type="evidence" value="ECO:0007669"/>
    <property type="project" value="UniProtKB-UniRule"/>
</dbReference>
<dbReference type="FunFam" id="3.10.430.100:FF:000001">
    <property type="entry name" value="50S ribosomal protein L9"/>
    <property type="match status" value="1"/>
</dbReference>
<dbReference type="FunFam" id="3.40.5.10:FF:000001">
    <property type="entry name" value="50S ribosomal protein L9"/>
    <property type="match status" value="1"/>
</dbReference>
<dbReference type="Gene3D" id="3.10.430.100">
    <property type="entry name" value="Ribosomal protein L9, C-terminal domain"/>
    <property type="match status" value="1"/>
</dbReference>
<dbReference type="Gene3D" id="3.40.5.10">
    <property type="entry name" value="Ribosomal protein L9, N-terminal domain"/>
    <property type="match status" value="1"/>
</dbReference>
<dbReference type="HAMAP" id="MF_00503">
    <property type="entry name" value="Ribosomal_bL9"/>
    <property type="match status" value="1"/>
</dbReference>
<dbReference type="InterPro" id="IPR000244">
    <property type="entry name" value="Ribosomal_bL9"/>
</dbReference>
<dbReference type="InterPro" id="IPR009027">
    <property type="entry name" value="Ribosomal_bL9/RNase_H1_N"/>
</dbReference>
<dbReference type="InterPro" id="IPR020594">
    <property type="entry name" value="Ribosomal_bL9_bac/chp"/>
</dbReference>
<dbReference type="InterPro" id="IPR020069">
    <property type="entry name" value="Ribosomal_bL9_C"/>
</dbReference>
<dbReference type="InterPro" id="IPR036791">
    <property type="entry name" value="Ribosomal_bL9_C_sf"/>
</dbReference>
<dbReference type="InterPro" id="IPR020070">
    <property type="entry name" value="Ribosomal_bL9_N"/>
</dbReference>
<dbReference type="InterPro" id="IPR036935">
    <property type="entry name" value="Ribosomal_bL9_N_sf"/>
</dbReference>
<dbReference type="NCBIfam" id="TIGR00158">
    <property type="entry name" value="L9"/>
    <property type="match status" value="1"/>
</dbReference>
<dbReference type="PANTHER" id="PTHR21368">
    <property type="entry name" value="50S RIBOSOMAL PROTEIN L9"/>
    <property type="match status" value="1"/>
</dbReference>
<dbReference type="Pfam" id="PF03948">
    <property type="entry name" value="Ribosomal_L9_C"/>
    <property type="match status" value="1"/>
</dbReference>
<dbReference type="Pfam" id="PF01281">
    <property type="entry name" value="Ribosomal_L9_N"/>
    <property type="match status" value="1"/>
</dbReference>
<dbReference type="SUPFAM" id="SSF55658">
    <property type="entry name" value="L9 N-domain-like"/>
    <property type="match status" value="1"/>
</dbReference>
<dbReference type="SUPFAM" id="SSF55653">
    <property type="entry name" value="Ribosomal protein L9 C-domain"/>
    <property type="match status" value="1"/>
</dbReference>
<dbReference type="PROSITE" id="PS00651">
    <property type="entry name" value="RIBOSOMAL_L9"/>
    <property type="match status" value="1"/>
</dbReference>
<keyword id="KW-0687">Ribonucleoprotein</keyword>
<keyword id="KW-0689">Ribosomal protein</keyword>
<keyword id="KW-0694">RNA-binding</keyword>
<keyword id="KW-0699">rRNA-binding</keyword>
<organism>
    <name type="scientific">Vibrio cholerae serotype O1 (strain ATCC 39541 / Classical Ogawa 395 / O395)</name>
    <dbReference type="NCBI Taxonomy" id="345073"/>
    <lineage>
        <taxon>Bacteria</taxon>
        <taxon>Pseudomonadati</taxon>
        <taxon>Pseudomonadota</taxon>
        <taxon>Gammaproteobacteria</taxon>
        <taxon>Vibrionales</taxon>
        <taxon>Vibrionaceae</taxon>
        <taxon>Vibrio</taxon>
    </lineage>
</organism>
<accession>A5F3I8</accession>
<accession>C3M4G3</accession>
<protein>
    <recommendedName>
        <fullName evidence="1">Large ribosomal subunit protein bL9</fullName>
    </recommendedName>
    <alternativeName>
        <fullName evidence="2">50S ribosomal protein L9</fullName>
    </alternativeName>
</protein>
<comment type="function">
    <text evidence="1">Binds to the 23S rRNA.</text>
</comment>
<comment type="similarity">
    <text evidence="1">Belongs to the bacterial ribosomal protein bL9 family.</text>
</comment>
<name>RL9_VIBC3</name>
<evidence type="ECO:0000255" key="1">
    <source>
        <dbReference type="HAMAP-Rule" id="MF_00503"/>
    </source>
</evidence>
<evidence type="ECO:0000305" key="2"/>
<feature type="chain" id="PRO_1000072452" description="Large ribosomal subunit protein bL9">
    <location>
        <begin position="1"/>
        <end position="149"/>
    </location>
</feature>